<reference key="1">
    <citation type="journal article" date="1992" name="J. Biochem.">
        <title>Molecular cloning of cDNAs for rat proteasomes: deduced primary structures of four other subunits.</title>
        <authorList>
            <person name="Tamura T."/>
            <person name="Shimbara N."/>
            <person name="Aki M."/>
            <person name="Ishida N."/>
            <person name="Bey F."/>
            <person name="Scherrer K."/>
            <person name="Tanaka K."/>
            <person name="Ichihara A."/>
        </authorList>
    </citation>
    <scope>NUCLEOTIDE SEQUENCE [MRNA]</scope>
</reference>
<reference key="2">
    <citation type="journal article" date="2004" name="Genome Res.">
        <title>The status, quality, and expansion of the NIH full-length cDNA project: the Mammalian Gene Collection (MGC).</title>
        <authorList>
            <consortium name="The MGC Project Team"/>
        </authorList>
    </citation>
    <scope>NUCLEOTIDE SEQUENCE [LARGE SCALE MRNA]</scope>
    <source>
        <tissue>Pituitary</tissue>
    </source>
</reference>
<reference key="3">
    <citation type="submission" date="2006-11" db="UniProtKB">
        <authorList>
            <person name="Lubec G."/>
            <person name="Afjehi-Sadat L."/>
        </authorList>
    </citation>
    <scope>PROTEIN SEQUENCE OF 12-21; 60-71; 154-164 AND 229-246</scope>
    <scope>IDENTIFICATION BY MASS SPECTROMETRY</scope>
    <source>
        <strain>Sprague-Dawley</strain>
        <tissue>Spinal cord</tissue>
    </source>
</reference>
<feature type="chain" id="PRO_0000124132" description="Proteasome subunit alpha type-6">
    <location>
        <begin position="1"/>
        <end position="246"/>
    </location>
</feature>
<feature type="modified residue" description="Phosphoserine" evidence="2">
    <location>
        <position position="17"/>
    </location>
</feature>
<feature type="modified residue" description="Phosphoserine" evidence="2">
    <location>
        <position position="63"/>
    </location>
</feature>
<feature type="modified residue" description="Phosphoserine" evidence="2">
    <location>
        <position position="64"/>
    </location>
</feature>
<feature type="modified residue" description="N6-acetyllysine" evidence="2">
    <location>
        <position position="102"/>
    </location>
</feature>
<feature type="modified residue" description="N6-acetyllysine" evidence="2">
    <location>
        <position position="104"/>
    </location>
</feature>
<feature type="modified residue" description="Phosphotyrosine" evidence="3">
    <location>
        <position position="159"/>
    </location>
</feature>
<feature type="glycosylation site" description="O-linked (GlcNAc) serine" evidence="1">
    <location>
        <position position="5"/>
    </location>
</feature>
<feature type="turn" evidence="5">
    <location>
        <begin position="10"/>
        <end position="12"/>
    </location>
</feature>
<feature type="helix" evidence="5">
    <location>
        <begin position="23"/>
        <end position="32"/>
    </location>
</feature>
<feature type="strand" evidence="5">
    <location>
        <begin position="38"/>
        <end position="43"/>
    </location>
</feature>
<feature type="strand" evidence="5">
    <location>
        <begin position="45"/>
        <end position="53"/>
    </location>
</feature>
<feature type="helix" evidence="5">
    <location>
        <begin position="63"/>
        <end position="65"/>
    </location>
</feature>
<feature type="strand" evidence="5">
    <location>
        <begin position="69"/>
        <end position="73"/>
    </location>
</feature>
<feature type="strand" evidence="5">
    <location>
        <begin position="76"/>
        <end position="82"/>
    </location>
</feature>
<feature type="helix" evidence="5">
    <location>
        <begin position="84"/>
        <end position="105"/>
    </location>
</feature>
<feature type="helix" evidence="5">
    <location>
        <begin position="111"/>
        <end position="125"/>
    </location>
</feature>
<feature type="strand" evidence="5">
    <location>
        <begin position="129"/>
        <end position="131"/>
    </location>
</feature>
<feature type="strand" evidence="5">
    <location>
        <begin position="136"/>
        <end position="144"/>
    </location>
</feature>
<feature type="turn" evidence="5">
    <location>
        <begin position="145"/>
        <end position="147"/>
    </location>
</feature>
<feature type="strand" evidence="5">
    <location>
        <begin position="148"/>
        <end position="154"/>
    </location>
</feature>
<feature type="strand" evidence="5">
    <location>
        <begin position="162"/>
        <end position="169"/>
    </location>
</feature>
<feature type="helix" evidence="5">
    <location>
        <begin position="172"/>
        <end position="180"/>
    </location>
</feature>
<feature type="strand" evidence="5">
    <location>
        <begin position="183"/>
        <end position="185"/>
    </location>
</feature>
<feature type="helix" evidence="5">
    <location>
        <begin position="186"/>
        <end position="188"/>
    </location>
</feature>
<feature type="helix" evidence="5">
    <location>
        <begin position="194"/>
        <end position="204"/>
    </location>
</feature>
<feature type="strand" evidence="5">
    <location>
        <begin position="214"/>
        <end position="224"/>
    </location>
</feature>
<feature type="helix" evidence="5">
    <location>
        <begin position="232"/>
        <end position="241"/>
    </location>
</feature>
<name>PSA6_RAT</name>
<organism>
    <name type="scientific">Rattus norvegicus</name>
    <name type="common">Rat</name>
    <dbReference type="NCBI Taxonomy" id="10116"/>
    <lineage>
        <taxon>Eukaryota</taxon>
        <taxon>Metazoa</taxon>
        <taxon>Chordata</taxon>
        <taxon>Craniata</taxon>
        <taxon>Vertebrata</taxon>
        <taxon>Euteleostomi</taxon>
        <taxon>Mammalia</taxon>
        <taxon>Eutheria</taxon>
        <taxon>Euarchontoglires</taxon>
        <taxon>Glires</taxon>
        <taxon>Rodentia</taxon>
        <taxon>Myomorpha</taxon>
        <taxon>Muroidea</taxon>
        <taxon>Muridae</taxon>
        <taxon>Murinae</taxon>
        <taxon>Rattus</taxon>
    </lineage>
</organism>
<comment type="function">
    <text evidence="2">Component of the 20S core proteasome complex involved in the proteolytic degradation of most intracellular proteins. This complex plays numerous essential roles within the cell by associating with different regulatory particles. Associated with two 19S regulatory particles, forms the 26S proteasome and thus participates in the ATP-dependent degradation of ubiquitinated proteins. The 26S proteasome plays a key role in the maintenance of protein homeostasis by removing misfolded or damaged proteins that could impair cellular functions, and by removing proteins whose functions are no longer required. Associated with the PA200 or PA28, the 20S proteasome mediates ubiquitin-independent protein degradation. This type of proteolysis is required in several pathways including spermatogenesis (20S-PA200 complex) or generation of a subset of MHC class I-presented antigenic peptides (20S-PA28 complex).</text>
</comment>
<comment type="subunit">
    <text evidence="2">The 26S proteasome consists of a 20S proteasome core and two 19S regulatory subunits. The 20S proteasome core is a barrel-shaped complex made of 28 subunits that are arranged in four stacked rings. The two outer rings are each formed by seven alpha subunits, and the two inner rings are formed by seven beta subunits. The proteolytic activity is exerted by three beta-subunits PSMB5, PSMB6 and PSMB7. Interacts with ALKBH4.</text>
</comment>
<comment type="subcellular location">
    <subcellularLocation>
        <location evidence="2 3">Cytoplasm</location>
    </subcellularLocation>
    <subcellularLocation>
        <location evidence="2">Nucleus</location>
    </subcellularLocation>
    <text evidence="2 3">Translocated from the cytoplasm into the nucleus following interaction with AKIRIN2, which bridges the proteasome with the nuclear import receptor IPO9 (By similarity). Colocalizes with TRIM5 in cytoplasmic bodies (By similarity).</text>
</comment>
<comment type="similarity">
    <text evidence="4">Belongs to the peptidase T1A family.</text>
</comment>
<gene>
    <name type="primary">Psma6</name>
</gene>
<keyword id="KW-0002">3D-structure</keyword>
<keyword id="KW-0007">Acetylation</keyword>
<keyword id="KW-0963">Cytoplasm</keyword>
<keyword id="KW-0903">Direct protein sequencing</keyword>
<keyword id="KW-0325">Glycoprotein</keyword>
<keyword id="KW-0539">Nucleus</keyword>
<keyword id="KW-0597">Phosphoprotein</keyword>
<keyword id="KW-0647">Proteasome</keyword>
<keyword id="KW-1185">Reference proteome</keyword>
<evidence type="ECO:0000250" key="1"/>
<evidence type="ECO:0000250" key="2">
    <source>
        <dbReference type="UniProtKB" id="P60900"/>
    </source>
</evidence>
<evidence type="ECO:0000250" key="3">
    <source>
        <dbReference type="UniProtKB" id="Q9QUM9"/>
    </source>
</evidence>
<evidence type="ECO:0000255" key="4">
    <source>
        <dbReference type="PROSITE-ProRule" id="PRU00808"/>
    </source>
</evidence>
<evidence type="ECO:0007829" key="5">
    <source>
        <dbReference type="PDB" id="6TU3"/>
    </source>
</evidence>
<sequence length="246" mass="27399">MSRGSSAGFDRHITIFSPEGRLYQVEYAFKAINQGGLTSVAVRGKDCAVIVTQKKVPDKLLDSSTVTHLFKITENIGCVMTGMTADSRSQVQRARYEAANWKYKYGYEIPVDMLCKRIADISQVYTQNAEMRPLGCCMILIGIDEEQGPQVYKCDPAGYYCGFKATAAGVKQTESTSFLEKKVKKKFDWTFEQTVETAITCLSTVLSIDFKPSEIEVGVVTVENPKFRILTEAEIDAHLVALAERD</sequence>
<accession>P60901</accession>
<accession>P34062</accession>
<protein>
    <recommendedName>
        <fullName>Proteasome subunit alpha type-6</fullName>
    </recommendedName>
    <alternativeName>
        <fullName>Macropain iota chain</fullName>
    </alternativeName>
    <alternativeName>
        <fullName>Multicatalytic endopeptidase complex iota chain</fullName>
    </alternativeName>
    <alternativeName>
        <fullName>Proteasome iota chain</fullName>
    </alternativeName>
    <alternativeName>
        <fullName>Proteasome subunit alpha-1</fullName>
        <shortName>alpha-1</shortName>
    </alternativeName>
</protein>
<proteinExistence type="evidence at protein level"/>
<dbReference type="EMBL" id="D10755">
    <property type="protein sequence ID" value="BAA01587.1"/>
    <property type="molecule type" value="mRNA"/>
</dbReference>
<dbReference type="EMBL" id="BC062232">
    <property type="protein sequence ID" value="AAH62232.1"/>
    <property type="molecule type" value="mRNA"/>
</dbReference>
<dbReference type="PIR" id="JX0230">
    <property type="entry name" value="JX0230"/>
</dbReference>
<dbReference type="RefSeq" id="NP_058979.1">
    <property type="nucleotide sequence ID" value="NM_017283.3"/>
</dbReference>
<dbReference type="PDB" id="6EPC">
    <property type="method" value="EM"/>
    <property type="resolution" value="12.30 A"/>
    <property type="chains" value="A=1-246"/>
</dbReference>
<dbReference type="PDB" id="6EPD">
    <property type="method" value="EM"/>
    <property type="resolution" value="15.40 A"/>
    <property type="chains" value="A=1-246"/>
</dbReference>
<dbReference type="PDB" id="6EPE">
    <property type="method" value="EM"/>
    <property type="resolution" value="12.80 A"/>
    <property type="chains" value="A=1-246"/>
</dbReference>
<dbReference type="PDB" id="6EPF">
    <property type="method" value="EM"/>
    <property type="resolution" value="11.80 A"/>
    <property type="chains" value="A=1-246"/>
</dbReference>
<dbReference type="PDB" id="6TU3">
    <property type="method" value="EM"/>
    <property type="resolution" value="2.70 A"/>
    <property type="chains" value="A/O=1-246"/>
</dbReference>
<dbReference type="PDBsum" id="6EPC"/>
<dbReference type="PDBsum" id="6EPD"/>
<dbReference type="PDBsum" id="6EPE"/>
<dbReference type="PDBsum" id="6EPF"/>
<dbReference type="PDBsum" id="6TU3"/>
<dbReference type="EMDB" id="EMD-10586"/>
<dbReference type="EMDB" id="EMD-3913"/>
<dbReference type="EMDB" id="EMD-3914"/>
<dbReference type="EMDB" id="EMD-3915"/>
<dbReference type="EMDB" id="EMD-3916"/>
<dbReference type="SMR" id="P60901"/>
<dbReference type="BioGRID" id="248294">
    <property type="interactions" value="5"/>
</dbReference>
<dbReference type="ComplexPortal" id="CPX-8965">
    <property type="entry name" value="30S proteasome complex"/>
</dbReference>
<dbReference type="FunCoup" id="P60901">
    <property type="interactions" value="2682"/>
</dbReference>
<dbReference type="IntAct" id="P60901">
    <property type="interactions" value="1"/>
</dbReference>
<dbReference type="STRING" id="10116.ENSRNOP00000009666"/>
<dbReference type="MEROPS" id="T01.971"/>
<dbReference type="GlyCosmos" id="P60901">
    <property type="glycosylation" value="1 site, No reported glycans"/>
</dbReference>
<dbReference type="GlyGen" id="P60901">
    <property type="glycosylation" value="2 sites, 1 O-linked glycan (1 site)"/>
</dbReference>
<dbReference type="iPTMnet" id="P60901"/>
<dbReference type="PhosphoSitePlus" id="P60901"/>
<dbReference type="jPOST" id="P60901"/>
<dbReference type="PaxDb" id="10116-ENSRNOP00000009666"/>
<dbReference type="Ensembl" id="ENSRNOT00000009666.7">
    <property type="protein sequence ID" value="ENSRNOP00000009666.3"/>
    <property type="gene ID" value="ENSRNOG00000007114.7"/>
</dbReference>
<dbReference type="GeneID" id="29673"/>
<dbReference type="KEGG" id="rno:29673"/>
<dbReference type="UCSC" id="RGD:61849">
    <property type="organism name" value="rat"/>
</dbReference>
<dbReference type="AGR" id="RGD:61849"/>
<dbReference type="CTD" id="5687"/>
<dbReference type="RGD" id="61849">
    <property type="gene designation" value="Psma6"/>
</dbReference>
<dbReference type="eggNOG" id="KOG0182">
    <property type="taxonomic scope" value="Eukaryota"/>
</dbReference>
<dbReference type="GeneTree" id="ENSGT00550000074807"/>
<dbReference type="HOGENOM" id="CLU_035750_4_1_1"/>
<dbReference type="InParanoid" id="P60901"/>
<dbReference type="OMA" id="YGYDMPV"/>
<dbReference type="OrthoDB" id="5835702at2759"/>
<dbReference type="PhylomeDB" id="P60901"/>
<dbReference type="TreeFam" id="TF106210"/>
<dbReference type="Reactome" id="R-RNO-1169091">
    <property type="pathway name" value="Activation of NF-kappaB in B cells"/>
</dbReference>
<dbReference type="Reactome" id="R-RNO-1234176">
    <property type="pathway name" value="Oxygen-dependent proline hydroxylation of Hypoxia-inducible Factor Alpha"/>
</dbReference>
<dbReference type="Reactome" id="R-RNO-1236978">
    <property type="pathway name" value="Cross-presentation of soluble exogenous antigens (endosomes)"/>
</dbReference>
<dbReference type="Reactome" id="R-RNO-174084">
    <property type="pathway name" value="Autodegradation of Cdh1 by Cdh1:APC/C"/>
</dbReference>
<dbReference type="Reactome" id="R-RNO-174113">
    <property type="pathway name" value="SCF-beta-TrCP mediated degradation of Emi1"/>
</dbReference>
<dbReference type="Reactome" id="R-RNO-174154">
    <property type="pathway name" value="APC/C:Cdc20 mediated degradation of Securin"/>
</dbReference>
<dbReference type="Reactome" id="R-RNO-174178">
    <property type="pathway name" value="APC/C:Cdh1 mediated degradation of Cdc20 and other APC/C:Cdh1 targeted proteins in late mitosis/early G1"/>
</dbReference>
<dbReference type="Reactome" id="R-RNO-174184">
    <property type="pathway name" value="Cdc20:Phospho-APC/C mediated degradation of Cyclin A"/>
</dbReference>
<dbReference type="Reactome" id="R-RNO-187577">
    <property type="pathway name" value="SCF(Skp2)-mediated degradation of p27/p21"/>
</dbReference>
<dbReference type="Reactome" id="R-RNO-195253">
    <property type="pathway name" value="Degradation of beta-catenin by the destruction complex"/>
</dbReference>
<dbReference type="Reactome" id="R-RNO-2467813">
    <property type="pathway name" value="Separation of Sister Chromatids"/>
</dbReference>
<dbReference type="Reactome" id="R-RNO-349425">
    <property type="pathway name" value="Autodegradation of the E3 ubiquitin ligase COP1"/>
</dbReference>
<dbReference type="Reactome" id="R-RNO-350562">
    <property type="pathway name" value="Regulation of ornithine decarboxylase (ODC)"/>
</dbReference>
<dbReference type="Reactome" id="R-RNO-382556">
    <property type="pathway name" value="ABC-family proteins mediated transport"/>
</dbReference>
<dbReference type="Reactome" id="R-RNO-450408">
    <property type="pathway name" value="AUF1 (hnRNP D0) binds and destabilizes mRNA"/>
</dbReference>
<dbReference type="Reactome" id="R-RNO-4608870">
    <property type="pathway name" value="Asymmetric localization of PCP proteins"/>
</dbReference>
<dbReference type="Reactome" id="R-RNO-4641257">
    <property type="pathway name" value="Degradation of AXIN"/>
</dbReference>
<dbReference type="Reactome" id="R-RNO-4641258">
    <property type="pathway name" value="Degradation of DVL"/>
</dbReference>
<dbReference type="Reactome" id="R-RNO-5358346">
    <property type="pathway name" value="Hedgehog ligand biogenesis"/>
</dbReference>
<dbReference type="Reactome" id="R-RNO-5607761">
    <property type="pathway name" value="Dectin-1 mediated noncanonical NF-kB signaling"/>
</dbReference>
<dbReference type="Reactome" id="R-RNO-5610780">
    <property type="pathway name" value="Degradation of GLI1 by the proteasome"/>
</dbReference>
<dbReference type="Reactome" id="R-RNO-5610785">
    <property type="pathway name" value="GLI3 is processed to GLI3R by the proteasome"/>
</dbReference>
<dbReference type="Reactome" id="R-RNO-5632684">
    <property type="pathway name" value="Hedgehog 'on' state"/>
</dbReference>
<dbReference type="Reactome" id="R-RNO-5658442">
    <property type="pathway name" value="Regulation of RAS by GAPs"/>
</dbReference>
<dbReference type="Reactome" id="R-RNO-5668541">
    <property type="pathway name" value="TNFR2 non-canonical NF-kB pathway"/>
</dbReference>
<dbReference type="Reactome" id="R-RNO-5676590">
    <property type="pathway name" value="NIK--&gt;noncanonical NF-kB signaling"/>
</dbReference>
<dbReference type="Reactome" id="R-RNO-5687128">
    <property type="pathway name" value="MAPK6/MAPK4 signaling"/>
</dbReference>
<dbReference type="Reactome" id="R-RNO-5689603">
    <property type="pathway name" value="UCH proteinases"/>
</dbReference>
<dbReference type="Reactome" id="R-RNO-5689880">
    <property type="pathway name" value="Ub-specific processing proteases"/>
</dbReference>
<dbReference type="Reactome" id="R-RNO-68867">
    <property type="pathway name" value="Assembly of the pre-replicative complex"/>
</dbReference>
<dbReference type="Reactome" id="R-RNO-68949">
    <property type="pathway name" value="Orc1 removal from chromatin"/>
</dbReference>
<dbReference type="Reactome" id="R-RNO-69017">
    <property type="pathway name" value="CDK-mediated phosphorylation and removal of Cdc6"/>
</dbReference>
<dbReference type="Reactome" id="R-RNO-69481">
    <property type="pathway name" value="G2/M Checkpoints"/>
</dbReference>
<dbReference type="Reactome" id="R-RNO-69601">
    <property type="pathway name" value="Ubiquitin Mediated Degradation of Phosphorylated Cdc25A"/>
</dbReference>
<dbReference type="Reactome" id="R-RNO-75815">
    <property type="pathway name" value="Ubiquitin-dependent degradation of Cyclin D"/>
</dbReference>
<dbReference type="Reactome" id="R-RNO-8852276">
    <property type="pathway name" value="The role of GTSE1 in G2/M progression after G2 checkpoint"/>
</dbReference>
<dbReference type="Reactome" id="R-RNO-8854050">
    <property type="pathway name" value="FBXL7 down-regulates AURKA during mitotic entry and in early mitosis"/>
</dbReference>
<dbReference type="Reactome" id="R-RNO-8939236">
    <property type="pathway name" value="RUNX1 regulates transcription of genes involved in differentiation of HSCs"/>
</dbReference>
<dbReference type="Reactome" id="R-RNO-8941858">
    <property type="pathway name" value="Regulation of RUNX3 expression and activity"/>
</dbReference>
<dbReference type="Reactome" id="R-RNO-8948751">
    <property type="pathway name" value="Regulation of PTEN stability and activity"/>
</dbReference>
<dbReference type="Reactome" id="R-RNO-8951664">
    <property type="pathway name" value="Neddylation"/>
</dbReference>
<dbReference type="Reactome" id="R-RNO-9755511">
    <property type="pathway name" value="KEAP1-NFE2L2 pathway"/>
</dbReference>
<dbReference type="Reactome" id="R-RNO-9762114">
    <property type="pathway name" value="GSK3B and BTRC:CUL1-mediated-degradation of NFE2L2"/>
</dbReference>
<dbReference type="Reactome" id="R-RNO-983168">
    <property type="pathway name" value="Antigen processing: Ubiquitination &amp; Proteasome degradation"/>
</dbReference>
<dbReference type="Reactome" id="R-RNO-9907900">
    <property type="pathway name" value="Proteasome assembly"/>
</dbReference>
<dbReference type="PRO" id="PR:P60901"/>
<dbReference type="Proteomes" id="UP000002494">
    <property type="component" value="Chromosome 6"/>
</dbReference>
<dbReference type="Bgee" id="ENSRNOG00000007114">
    <property type="expression patterns" value="Expressed in testis and 20 other cell types or tissues"/>
</dbReference>
<dbReference type="ExpressionAtlas" id="P60901">
    <property type="expression patterns" value="baseline and differential"/>
</dbReference>
<dbReference type="GO" id="GO:0005737">
    <property type="term" value="C:cytoplasm"/>
    <property type="evidence" value="ECO:0000266"/>
    <property type="project" value="RGD"/>
</dbReference>
<dbReference type="GO" id="GO:0030016">
    <property type="term" value="C:myofibril"/>
    <property type="evidence" value="ECO:0000314"/>
    <property type="project" value="BHF-UCL"/>
</dbReference>
<dbReference type="GO" id="GO:0016363">
    <property type="term" value="C:nuclear matrix"/>
    <property type="evidence" value="ECO:0000250"/>
    <property type="project" value="BHF-UCL"/>
</dbReference>
<dbReference type="GO" id="GO:0005634">
    <property type="term" value="C:nucleus"/>
    <property type="evidence" value="ECO:0000250"/>
    <property type="project" value="BHF-UCL"/>
</dbReference>
<dbReference type="GO" id="GO:0000932">
    <property type="term" value="C:P-body"/>
    <property type="evidence" value="ECO:0000250"/>
    <property type="project" value="UniProtKB"/>
</dbReference>
<dbReference type="GO" id="GO:0000502">
    <property type="term" value="C:proteasome complex"/>
    <property type="evidence" value="ECO:0000266"/>
    <property type="project" value="RGD"/>
</dbReference>
<dbReference type="GO" id="GO:0005839">
    <property type="term" value="C:proteasome core complex"/>
    <property type="evidence" value="ECO:0000250"/>
    <property type="project" value="UniProtKB"/>
</dbReference>
<dbReference type="GO" id="GO:0019773">
    <property type="term" value="C:proteasome core complex, alpha-subunit complex"/>
    <property type="evidence" value="ECO:0000250"/>
    <property type="project" value="UniProtKB"/>
</dbReference>
<dbReference type="GO" id="GO:0005840">
    <property type="term" value="C:ribosome"/>
    <property type="evidence" value="ECO:0000250"/>
    <property type="project" value="BHF-UCL"/>
</dbReference>
<dbReference type="GO" id="GO:0030017">
    <property type="term" value="C:sarcomere"/>
    <property type="evidence" value="ECO:0000314"/>
    <property type="project" value="BHF-UCL"/>
</dbReference>
<dbReference type="GO" id="GO:0051059">
    <property type="term" value="F:NF-kappaB binding"/>
    <property type="evidence" value="ECO:0000266"/>
    <property type="project" value="RGD"/>
</dbReference>
<dbReference type="GO" id="GO:0003723">
    <property type="term" value="F:RNA binding"/>
    <property type="evidence" value="ECO:0000250"/>
    <property type="project" value="BHF-UCL"/>
</dbReference>
<dbReference type="GO" id="GO:0043123">
    <property type="term" value="P:positive regulation of canonical NF-kappaB signal transduction"/>
    <property type="evidence" value="ECO:0000250"/>
    <property type="project" value="BHF-UCL"/>
</dbReference>
<dbReference type="GO" id="GO:0043161">
    <property type="term" value="P:proteasome-mediated ubiquitin-dependent protein catabolic process"/>
    <property type="evidence" value="ECO:0000318"/>
    <property type="project" value="GO_Central"/>
</dbReference>
<dbReference type="GO" id="GO:0051603">
    <property type="term" value="P:proteolysis involved in protein catabolic process"/>
    <property type="evidence" value="ECO:0000250"/>
    <property type="project" value="BHF-UCL"/>
</dbReference>
<dbReference type="CDD" id="cd03754">
    <property type="entry name" value="proteasome_alpha_type_6"/>
    <property type="match status" value="1"/>
</dbReference>
<dbReference type="FunFam" id="3.60.20.10:FF:000020">
    <property type="entry name" value="Proteasome subunit alpha type"/>
    <property type="match status" value="1"/>
</dbReference>
<dbReference type="Gene3D" id="3.60.20.10">
    <property type="entry name" value="Glutamine Phosphoribosylpyrophosphate, subunit 1, domain 1"/>
    <property type="match status" value="1"/>
</dbReference>
<dbReference type="InterPro" id="IPR029055">
    <property type="entry name" value="Ntn_hydrolases_N"/>
</dbReference>
<dbReference type="InterPro" id="IPR050115">
    <property type="entry name" value="Proteasome_alpha"/>
</dbReference>
<dbReference type="InterPro" id="IPR023332">
    <property type="entry name" value="Proteasome_alpha-type"/>
</dbReference>
<dbReference type="InterPro" id="IPR000426">
    <property type="entry name" value="Proteasome_asu_N"/>
</dbReference>
<dbReference type="InterPro" id="IPR001353">
    <property type="entry name" value="Proteasome_sua/b"/>
</dbReference>
<dbReference type="InterPro" id="IPR034642">
    <property type="entry name" value="Proteasome_subunit_alpha6"/>
</dbReference>
<dbReference type="NCBIfam" id="NF003075">
    <property type="entry name" value="PRK03996.1"/>
    <property type="match status" value="1"/>
</dbReference>
<dbReference type="PANTHER" id="PTHR11599">
    <property type="entry name" value="PROTEASOME SUBUNIT ALPHA/BETA"/>
    <property type="match status" value="1"/>
</dbReference>
<dbReference type="Pfam" id="PF00227">
    <property type="entry name" value="Proteasome"/>
    <property type="match status" value="1"/>
</dbReference>
<dbReference type="Pfam" id="PF10584">
    <property type="entry name" value="Proteasome_A_N"/>
    <property type="match status" value="1"/>
</dbReference>
<dbReference type="SMART" id="SM00948">
    <property type="entry name" value="Proteasome_A_N"/>
    <property type="match status" value="1"/>
</dbReference>
<dbReference type="SUPFAM" id="SSF56235">
    <property type="entry name" value="N-terminal nucleophile aminohydrolases (Ntn hydrolases)"/>
    <property type="match status" value="1"/>
</dbReference>
<dbReference type="PROSITE" id="PS00388">
    <property type="entry name" value="PROTEASOME_ALPHA_1"/>
    <property type="match status" value="1"/>
</dbReference>
<dbReference type="PROSITE" id="PS51475">
    <property type="entry name" value="PROTEASOME_ALPHA_2"/>
    <property type="match status" value="1"/>
</dbReference>